<feature type="chain" id="PRO_0000063875" description="Beta-glucosidase A">
    <location>
        <begin position="1"/>
        <end position="455"/>
    </location>
</feature>
<feature type="active site" description="Proton donor" evidence="1">
    <location>
        <position position="165"/>
    </location>
</feature>
<feature type="active site" description="Nucleophile" evidence="2">
    <location>
        <position position="363"/>
    </location>
</feature>
<sequence>MDMSFPKGFLWGAATASYQIEGAWNEDGKGESIWDRFTHQKRNILYGHNGDVACDHYHRFEEDVSLMKELGLKAYRFSIAWTRIFPDGFGTVNQKGLEFYDRLINKLVENGIEPVVTLYHWDLPQKLQDIGGWANPEIVNYYFDYAMLVINRYKDKVKKWITFNEPYCIAFLGYFHGIHAPGIKDFKVAMDVVHSLMLSHFKVVKAVKENNIDVEVGITLNLTPVYLQTERLGYKVSEIEREMVSLSSQLDNQLFLDPVLKGSYPQKLLDYLVQKDLLDSQKALSMQQEVKENFIFPDFLGINYYTRAVRLYDENSSWIFPIRWEHPAGEYTEMGWEVFPQGLFDLLIWIKESYPQIPIYITENGAAYNDIVTEDGKVHDSKRIEYLKQHFEAARKAIENGVDLRGYFVWSLMDNFEWAMGYTKRFGIIYVDYETQKRIKKDSFYFYQQYIKENS</sequence>
<organism>
    <name type="scientific">Caldicellulosiruptor saccharolyticus</name>
    <name type="common">Caldocellum saccharolyticum</name>
    <dbReference type="NCBI Taxonomy" id="44001"/>
    <lineage>
        <taxon>Bacteria</taxon>
        <taxon>Bacillati</taxon>
        <taxon>Bacillota</taxon>
        <taxon>Bacillota incertae sedis</taxon>
        <taxon>Caldicellulosiruptorales</taxon>
        <taxon>Caldicellulosiruptoraceae</taxon>
        <taxon>Caldicellulosiruptor</taxon>
    </lineage>
</organism>
<protein>
    <recommendedName>
        <fullName>Beta-glucosidase A</fullName>
        <ecNumber>3.2.1.21</ecNumber>
    </recommendedName>
    <alternativeName>
        <fullName>Amygdalase</fullName>
    </alternativeName>
    <alternativeName>
        <fullName>Beta-D-glucoside glucohydrolase</fullName>
    </alternativeName>
    <alternativeName>
        <fullName>Cellobiase</fullName>
    </alternativeName>
    <alternativeName>
        <fullName>Gentiobiase</fullName>
    </alternativeName>
</protein>
<dbReference type="EC" id="3.2.1.21"/>
<dbReference type="EMBL" id="X12575">
    <property type="protein sequence ID" value="CAA31087.1"/>
    <property type="molecule type" value="Genomic_DNA"/>
</dbReference>
<dbReference type="PIR" id="S03813">
    <property type="entry name" value="S03813"/>
</dbReference>
<dbReference type="SMR" id="P10482"/>
<dbReference type="BindingDB" id="P10482"/>
<dbReference type="ChEMBL" id="CHEMBL4622"/>
<dbReference type="CAZy" id="GH1">
    <property type="family name" value="Glycoside Hydrolase Family 1"/>
</dbReference>
<dbReference type="BRENDA" id="3.2.1.21">
    <property type="organism ID" value="1055"/>
</dbReference>
<dbReference type="GO" id="GO:0005829">
    <property type="term" value="C:cytosol"/>
    <property type="evidence" value="ECO:0007669"/>
    <property type="project" value="TreeGrafter"/>
</dbReference>
<dbReference type="GO" id="GO:0008422">
    <property type="term" value="F:beta-glucosidase activity"/>
    <property type="evidence" value="ECO:0007669"/>
    <property type="project" value="UniProtKB-EC"/>
</dbReference>
<dbReference type="GO" id="GO:0030245">
    <property type="term" value="P:cellulose catabolic process"/>
    <property type="evidence" value="ECO:0007669"/>
    <property type="project" value="UniProtKB-KW"/>
</dbReference>
<dbReference type="FunFam" id="3.20.20.80:FF:000004">
    <property type="entry name" value="Beta-glucosidase 6-phospho-beta-glucosidase"/>
    <property type="match status" value="1"/>
</dbReference>
<dbReference type="Gene3D" id="3.20.20.80">
    <property type="entry name" value="Glycosidases"/>
    <property type="match status" value="1"/>
</dbReference>
<dbReference type="InterPro" id="IPR001360">
    <property type="entry name" value="Glyco_hydro_1"/>
</dbReference>
<dbReference type="InterPro" id="IPR018120">
    <property type="entry name" value="Glyco_hydro_1_AS"/>
</dbReference>
<dbReference type="InterPro" id="IPR017736">
    <property type="entry name" value="Glyco_hydro_1_beta-glucosidase"/>
</dbReference>
<dbReference type="InterPro" id="IPR033132">
    <property type="entry name" value="Glyco_hydro_1_N_CS"/>
</dbReference>
<dbReference type="InterPro" id="IPR017853">
    <property type="entry name" value="Glycoside_hydrolase_SF"/>
</dbReference>
<dbReference type="NCBIfam" id="TIGR03356">
    <property type="entry name" value="BGL"/>
    <property type="match status" value="1"/>
</dbReference>
<dbReference type="PANTHER" id="PTHR10353">
    <property type="entry name" value="GLYCOSYL HYDROLASE"/>
    <property type="match status" value="1"/>
</dbReference>
<dbReference type="PANTHER" id="PTHR10353:SF36">
    <property type="entry name" value="LP05116P"/>
    <property type="match status" value="1"/>
</dbReference>
<dbReference type="Pfam" id="PF00232">
    <property type="entry name" value="Glyco_hydro_1"/>
    <property type="match status" value="1"/>
</dbReference>
<dbReference type="PRINTS" id="PR00131">
    <property type="entry name" value="GLHYDRLASE1"/>
</dbReference>
<dbReference type="SUPFAM" id="SSF51445">
    <property type="entry name" value="(Trans)glycosidases"/>
    <property type="match status" value="1"/>
</dbReference>
<dbReference type="PROSITE" id="PS00572">
    <property type="entry name" value="GLYCOSYL_HYDROL_F1_1"/>
    <property type="match status" value="1"/>
</dbReference>
<dbReference type="PROSITE" id="PS00653">
    <property type="entry name" value="GLYCOSYL_HYDROL_F1_2"/>
    <property type="match status" value="1"/>
</dbReference>
<reference key="1">
    <citation type="journal article" date="1988" name="Mol. Gen. Genet.">
        <title>Sequence structure and expression of a cloned beta-glucosidase gene from an extreme thermophile.</title>
        <authorList>
            <person name="Love D.R."/>
            <person name="Bergquist P.L."/>
        </authorList>
    </citation>
    <scope>NUCLEOTIDE SEQUENCE [GENOMIC DNA]</scope>
</reference>
<gene>
    <name type="primary">bglA</name>
</gene>
<accession>P10482</accession>
<name>BGLS_CALSA</name>
<proteinExistence type="inferred from homology"/>
<keyword id="KW-0119">Carbohydrate metabolism</keyword>
<keyword id="KW-0136">Cellulose degradation</keyword>
<keyword id="KW-0326">Glycosidase</keyword>
<keyword id="KW-0378">Hydrolase</keyword>
<keyword id="KW-0624">Polysaccharide degradation</keyword>
<comment type="catalytic activity">
    <reaction>
        <text>Hydrolysis of terminal, non-reducing beta-D-glucosyl residues with release of beta-D-glucose.</text>
        <dbReference type="EC" id="3.2.1.21"/>
    </reaction>
</comment>
<comment type="miscellaneous">
    <text>C.saccharolyticum is an extreme thermophile and appears to be a Gram-positive anaerobic bacterium.</text>
</comment>
<comment type="similarity">
    <text evidence="3">Belongs to the glycosyl hydrolase 1 family.</text>
</comment>
<evidence type="ECO:0000255" key="1"/>
<evidence type="ECO:0000255" key="2">
    <source>
        <dbReference type="PROSITE-ProRule" id="PRU10055"/>
    </source>
</evidence>
<evidence type="ECO:0000305" key="3"/>